<feature type="chain" id="PRO_0000269374" description="Large ribosomal subunit protein bL21">
    <location>
        <begin position="1"/>
        <end position="103"/>
    </location>
</feature>
<proteinExistence type="inferred from homology"/>
<sequence length="103" mass="11336">MYAVFQSGGKQHRVAEGHTVRLEKLEVATGATVEFDQVLLIADGETVHVGAPLVAGGKVVAEVVGHGRGEKVTIIKFRRRKHHDKKMGHRQWFTEVKITAINA</sequence>
<reference key="1">
    <citation type="submission" date="2006-03" db="EMBL/GenBank/DDBJ databases">
        <title>Complete sequence of Shewanella denitrificans OS217.</title>
        <authorList>
            <consortium name="US DOE Joint Genome Institute"/>
            <person name="Copeland A."/>
            <person name="Lucas S."/>
            <person name="Lapidus A."/>
            <person name="Barry K."/>
            <person name="Detter J.C."/>
            <person name="Glavina del Rio T."/>
            <person name="Hammon N."/>
            <person name="Israni S."/>
            <person name="Dalin E."/>
            <person name="Tice H."/>
            <person name="Pitluck S."/>
            <person name="Brettin T."/>
            <person name="Bruce D."/>
            <person name="Han C."/>
            <person name="Tapia R."/>
            <person name="Gilna P."/>
            <person name="Kiss H."/>
            <person name="Schmutz J."/>
            <person name="Larimer F."/>
            <person name="Land M."/>
            <person name="Hauser L."/>
            <person name="Kyrpides N."/>
            <person name="Lykidis A."/>
            <person name="Richardson P."/>
        </authorList>
    </citation>
    <scope>NUCLEOTIDE SEQUENCE [LARGE SCALE GENOMIC DNA]</scope>
    <source>
        <strain>OS217 / ATCC BAA-1090 / DSM 15013</strain>
    </source>
</reference>
<keyword id="KW-1185">Reference proteome</keyword>
<keyword id="KW-0687">Ribonucleoprotein</keyword>
<keyword id="KW-0689">Ribosomal protein</keyword>
<keyword id="KW-0694">RNA-binding</keyword>
<keyword id="KW-0699">rRNA-binding</keyword>
<gene>
    <name evidence="1" type="primary">rplU</name>
    <name type="ordered locus">Sden_2927</name>
</gene>
<accession>Q12K21</accession>
<dbReference type="EMBL" id="CP000302">
    <property type="protein sequence ID" value="ABE56205.1"/>
    <property type="molecule type" value="Genomic_DNA"/>
</dbReference>
<dbReference type="RefSeq" id="WP_011497354.1">
    <property type="nucleotide sequence ID" value="NC_007954.1"/>
</dbReference>
<dbReference type="SMR" id="Q12K21"/>
<dbReference type="STRING" id="318161.Sden_2927"/>
<dbReference type="KEGG" id="sdn:Sden_2927"/>
<dbReference type="eggNOG" id="COG0261">
    <property type="taxonomic scope" value="Bacteria"/>
</dbReference>
<dbReference type="HOGENOM" id="CLU_061463_3_3_6"/>
<dbReference type="OrthoDB" id="9813334at2"/>
<dbReference type="Proteomes" id="UP000001982">
    <property type="component" value="Chromosome"/>
</dbReference>
<dbReference type="GO" id="GO:0005737">
    <property type="term" value="C:cytoplasm"/>
    <property type="evidence" value="ECO:0007669"/>
    <property type="project" value="UniProtKB-ARBA"/>
</dbReference>
<dbReference type="GO" id="GO:1990904">
    <property type="term" value="C:ribonucleoprotein complex"/>
    <property type="evidence" value="ECO:0007669"/>
    <property type="project" value="UniProtKB-KW"/>
</dbReference>
<dbReference type="GO" id="GO:0005840">
    <property type="term" value="C:ribosome"/>
    <property type="evidence" value="ECO:0007669"/>
    <property type="project" value="UniProtKB-KW"/>
</dbReference>
<dbReference type="GO" id="GO:0019843">
    <property type="term" value="F:rRNA binding"/>
    <property type="evidence" value="ECO:0007669"/>
    <property type="project" value="UniProtKB-UniRule"/>
</dbReference>
<dbReference type="GO" id="GO:0003735">
    <property type="term" value="F:structural constituent of ribosome"/>
    <property type="evidence" value="ECO:0007669"/>
    <property type="project" value="InterPro"/>
</dbReference>
<dbReference type="GO" id="GO:0006412">
    <property type="term" value="P:translation"/>
    <property type="evidence" value="ECO:0007669"/>
    <property type="project" value="UniProtKB-UniRule"/>
</dbReference>
<dbReference type="HAMAP" id="MF_01363">
    <property type="entry name" value="Ribosomal_bL21"/>
    <property type="match status" value="1"/>
</dbReference>
<dbReference type="InterPro" id="IPR028909">
    <property type="entry name" value="bL21-like"/>
</dbReference>
<dbReference type="InterPro" id="IPR036164">
    <property type="entry name" value="bL21-like_sf"/>
</dbReference>
<dbReference type="InterPro" id="IPR001787">
    <property type="entry name" value="Ribosomal_bL21"/>
</dbReference>
<dbReference type="InterPro" id="IPR018258">
    <property type="entry name" value="Ribosomal_bL21_CS"/>
</dbReference>
<dbReference type="NCBIfam" id="TIGR00061">
    <property type="entry name" value="L21"/>
    <property type="match status" value="1"/>
</dbReference>
<dbReference type="PANTHER" id="PTHR21349">
    <property type="entry name" value="50S RIBOSOMAL PROTEIN L21"/>
    <property type="match status" value="1"/>
</dbReference>
<dbReference type="PANTHER" id="PTHR21349:SF0">
    <property type="entry name" value="LARGE RIBOSOMAL SUBUNIT PROTEIN BL21M"/>
    <property type="match status" value="1"/>
</dbReference>
<dbReference type="Pfam" id="PF00829">
    <property type="entry name" value="Ribosomal_L21p"/>
    <property type="match status" value="1"/>
</dbReference>
<dbReference type="SUPFAM" id="SSF141091">
    <property type="entry name" value="L21p-like"/>
    <property type="match status" value="1"/>
</dbReference>
<dbReference type="PROSITE" id="PS01169">
    <property type="entry name" value="RIBOSOMAL_L21"/>
    <property type="match status" value="1"/>
</dbReference>
<evidence type="ECO:0000255" key="1">
    <source>
        <dbReference type="HAMAP-Rule" id="MF_01363"/>
    </source>
</evidence>
<evidence type="ECO:0000305" key="2"/>
<organism>
    <name type="scientific">Shewanella denitrificans (strain OS217 / ATCC BAA-1090 / DSM 15013)</name>
    <dbReference type="NCBI Taxonomy" id="318161"/>
    <lineage>
        <taxon>Bacteria</taxon>
        <taxon>Pseudomonadati</taxon>
        <taxon>Pseudomonadota</taxon>
        <taxon>Gammaproteobacteria</taxon>
        <taxon>Alteromonadales</taxon>
        <taxon>Shewanellaceae</taxon>
        <taxon>Shewanella</taxon>
    </lineage>
</organism>
<comment type="function">
    <text evidence="1">This protein binds to 23S rRNA in the presence of protein L20.</text>
</comment>
<comment type="subunit">
    <text evidence="1">Part of the 50S ribosomal subunit. Contacts protein L20.</text>
</comment>
<comment type="similarity">
    <text evidence="1">Belongs to the bacterial ribosomal protein bL21 family.</text>
</comment>
<name>RL21_SHEDO</name>
<protein>
    <recommendedName>
        <fullName evidence="1">Large ribosomal subunit protein bL21</fullName>
    </recommendedName>
    <alternativeName>
        <fullName evidence="2">50S ribosomal protein L21</fullName>
    </alternativeName>
</protein>